<keyword id="KW-0150">Chloroplast</keyword>
<keyword id="KW-0507">mRNA processing</keyword>
<keyword id="KW-0934">Plastid</keyword>
<keyword id="KW-0694">RNA-binding</keyword>
<keyword id="KW-0819">tRNA processing</keyword>
<proteinExistence type="inferred from homology"/>
<gene>
    <name evidence="1" type="primary">matK</name>
</gene>
<geneLocation type="chloroplast"/>
<feature type="chain" id="PRO_0000143705" description="Maturase K">
    <location>
        <begin position="1"/>
        <end position="509"/>
    </location>
</feature>
<dbReference type="EMBL" id="AF152209">
    <property type="protein sequence ID" value="AAF25762.1"/>
    <property type="molecule type" value="Genomic_DNA"/>
</dbReference>
<dbReference type="GO" id="GO:0009507">
    <property type="term" value="C:chloroplast"/>
    <property type="evidence" value="ECO:0007669"/>
    <property type="project" value="UniProtKB-SubCell"/>
</dbReference>
<dbReference type="GO" id="GO:0003723">
    <property type="term" value="F:RNA binding"/>
    <property type="evidence" value="ECO:0007669"/>
    <property type="project" value="UniProtKB-KW"/>
</dbReference>
<dbReference type="GO" id="GO:0006397">
    <property type="term" value="P:mRNA processing"/>
    <property type="evidence" value="ECO:0007669"/>
    <property type="project" value="UniProtKB-KW"/>
</dbReference>
<dbReference type="GO" id="GO:0008380">
    <property type="term" value="P:RNA splicing"/>
    <property type="evidence" value="ECO:0007669"/>
    <property type="project" value="UniProtKB-UniRule"/>
</dbReference>
<dbReference type="GO" id="GO:0008033">
    <property type="term" value="P:tRNA processing"/>
    <property type="evidence" value="ECO:0007669"/>
    <property type="project" value="UniProtKB-KW"/>
</dbReference>
<dbReference type="HAMAP" id="MF_01390">
    <property type="entry name" value="MatK"/>
    <property type="match status" value="1"/>
</dbReference>
<dbReference type="InterPro" id="IPR024937">
    <property type="entry name" value="Domain_X"/>
</dbReference>
<dbReference type="InterPro" id="IPR002866">
    <property type="entry name" value="Maturase_MatK"/>
</dbReference>
<dbReference type="InterPro" id="IPR024942">
    <property type="entry name" value="Maturase_MatK_N"/>
</dbReference>
<dbReference type="PANTHER" id="PTHR34811">
    <property type="entry name" value="MATURASE K"/>
    <property type="match status" value="1"/>
</dbReference>
<dbReference type="PANTHER" id="PTHR34811:SF1">
    <property type="entry name" value="MATURASE K"/>
    <property type="match status" value="1"/>
</dbReference>
<dbReference type="Pfam" id="PF01348">
    <property type="entry name" value="Intron_maturas2"/>
    <property type="match status" value="1"/>
</dbReference>
<dbReference type="Pfam" id="PF01824">
    <property type="entry name" value="MatK_N"/>
    <property type="match status" value="1"/>
</dbReference>
<name>MATK_SEQSE</name>
<comment type="function">
    <text evidence="1">Usually encoded in the trnK tRNA gene intron. Probably assists in splicing its own and other chloroplast group II introns.</text>
</comment>
<comment type="subcellular location">
    <subcellularLocation>
        <location>Plastid</location>
        <location>Chloroplast</location>
    </subcellularLocation>
</comment>
<comment type="similarity">
    <text evidence="1">Belongs to the intron maturase 2 family. MatK subfamily.</text>
</comment>
<accession>Q9MSS8</accession>
<protein>
    <recommendedName>
        <fullName evidence="1">Maturase K</fullName>
    </recommendedName>
    <alternativeName>
        <fullName evidence="1">Intron maturase</fullName>
    </alternativeName>
</protein>
<organism>
    <name type="scientific">Sequoia sempervirens</name>
    <name type="common">California redwood</name>
    <name type="synonym">Taxodium sempervirens</name>
    <dbReference type="NCBI Taxonomy" id="28980"/>
    <lineage>
        <taxon>Eukaryota</taxon>
        <taxon>Viridiplantae</taxon>
        <taxon>Streptophyta</taxon>
        <taxon>Embryophyta</taxon>
        <taxon>Tracheophyta</taxon>
        <taxon>Spermatophyta</taxon>
        <taxon>Pinopsida</taxon>
        <taxon>Pinidae</taxon>
        <taxon>Conifers II</taxon>
        <taxon>Cupressales</taxon>
        <taxon>Cupressaceae</taxon>
        <taxon>Sequoia</taxon>
    </lineage>
</organism>
<evidence type="ECO:0000255" key="1">
    <source>
        <dbReference type="HAMAP-Rule" id="MF_01390"/>
    </source>
</evidence>
<sequence>MDELQRNQNKHRSWQQFFLYPLFFREDLYAIAHDHHLDRSGSSEPTEFLVSRFFSFLTVKRSIRRIRKQKNSISLLGNCDRNQFIECNKNFCSKSILEGLTVVLEVSFAMRSKHFIEGMDGWNSIRSIHCIFPLMEDKLPHSNYISDIRVPYSIHPEILVRIFRRWIRDTPSLHLLRSILHEWKNSFSRENLQKAIITQGENTRFSLFLWNSYVYECESFLVPLVKRFFNSQSLLYGSFPDRTHFDKKIKHIVIFPXRQISTKKIWLLKDSFIHYVRYGERSLIALKGTHLEVKKWRYHLLHFWQYYFHLWFQPYRIRSLELSKTYSSFLGYFLHVKMKPLVVRAKMLDNLFITDLITNELNPIAPIRSILFFLAKEKFCDISGWPISKLSWTSLSDDDILDRFDRIWINLFHYYSGSMNRDGLYHIKYILLLSCAKTLACKHKSTIRVVREQLGSELFTKSFSKEREFISSSFSKNRLQRERIWNSEISQINPLANFWQKMQNKQIEN</sequence>
<reference key="1">
    <citation type="journal article" date="2000" name="Am. J. Bot.">
        <title>Relationships within Cupressaceae sensu lato: a combined morphological and molecular approach.</title>
        <authorList>
            <person name="Gadek P.A."/>
            <person name="Alpers D.L."/>
            <person name="Heslewood M.M."/>
            <person name="Quinn C.J."/>
        </authorList>
    </citation>
    <scope>NUCLEOTIDE SEQUENCE [GENOMIC DNA]</scope>
</reference>